<organism>
    <name type="scientific">Mycobacterium sp. (strain KMS)</name>
    <dbReference type="NCBI Taxonomy" id="189918"/>
    <lineage>
        <taxon>Bacteria</taxon>
        <taxon>Bacillati</taxon>
        <taxon>Actinomycetota</taxon>
        <taxon>Actinomycetes</taxon>
        <taxon>Mycobacteriales</taxon>
        <taxon>Mycobacteriaceae</taxon>
        <taxon>Mycobacterium</taxon>
    </lineage>
</organism>
<accession>A1UFM0</accession>
<gene>
    <name evidence="1" type="primary">fmt</name>
    <name type="ordered locus">Mkms_2430</name>
</gene>
<name>FMT_MYCSK</name>
<evidence type="ECO:0000255" key="1">
    <source>
        <dbReference type="HAMAP-Rule" id="MF_00182"/>
    </source>
</evidence>
<comment type="function">
    <text evidence="1">Attaches a formyl group to the free amino group of methionyl-tRNA(fMet). The formyl group appears to play a dual role in the initiator identity of N-formylmethionyl-tRNA by promoting its recognition by IF2 and preventing the misappropriation of this tRNA by the elongation apparatus.</text>
</comment>
<comment type="catalytic activity">
    <reaction evidence="1">
        <text>L-methionyl-tRNA(fMet) + (6R)-10-formyltetrahydrofolate = N-formyl-L-methionyl-tRNA(fMet) + (6S)-5,6,7,8-tetrahydrofolate + H(+)</text>
        <dbReference type="Rhea" id="RHEA:24380"/>
        <dbReference type="Rhea" id="RHEA-COMP:9952"/>
        <dbReference type="Rhea" id="RHEA-COMP:9953"/>
        <dbReference type="ChEBI" id="CHEBI:15378"/>
        <dbReference type="ChEBI" id="CHEBI:57453"/>
        <dbReference type="ChEBI" id="CHEBI:78530"/>
        <dbReference type="ChEBI" id="CHEBI:78844"/>
        <dbReference type="ChEBI" id="CHEBI:195366"/>
        <dbReference type="EC" id="2.1.2.9"/>
    </reaction>
</comment>
<comment type="similarity">
    <text evidence="1">Belongs to the Fmt family.</text>
</comment>
<keyword id="KW-0648">Protein biosynthesis</keyword>
<keyword id="KW-0808">Transferase</keyword>
<proteinExistence type="inferred from homology"/>
<dbReference type="EC" id="2.1.2.9" evidence="1"/>
<dbReference type="EMBL" id="CP000518">
    <property type="protein sequence ID" value="ABL91628.1"/>
    <property type="molecule type" value="Genomic_DNA"/>
</dbReference>
<dbReference type="SMR" id="A1UFM0"/>
<dbReference type="STRING" id="189918.Mkms_2430"/>
<dbReference type="KEGG" id="mkm:Mkms_2430"/>
<dbReference type="HOGENOM" id="CLU_033347_1_0_11"/>
<dbReference type="OrthoDB" id="9802815at2"/>
<dbReference type="GO" id="GO:0005829">
    <property type="term" value="C:cytosol"/>
    <property type="evidence" value="ECO:0007669"/>
    <property type="project" value="TreeGrafter"/>
</dbReference>
<dbReference type="GO" id="GO:0004479">
    <property type="term" value="F:methionyl-tRNA formyltransferase activity"/>
    <property type="evidence" value="ECO:0007669"/>
    <property type="project" value="UniProtKB-UniRule"/>
</dbReference>
<dbReference type="CDD" id="cd08646">
    <property type="entry name" value="FMT_core_Met-tRNA-FMT_N"/>
    <property type="match status" value="1"/>
</dbReference>
<dbReference type="CDD" id="cd08704">
    <property type="entry name" value="Met_tRNA_FMT_C"/>
    <property type="match status" value="1"/>
</dbReference>
<dbReference type="FunFam" id="3.40.50.12230:FF:000001">
    <property type="entry name" value="Methionyl-tRNA formyltransferase"/>
    <property type="match status" value="1"/>
</dbReference>
<dbReference type="Gene3D" id="3.40.50.12230">
    <property type="match status" value="1"/>
</dbReference>
<dbReference type="HAMAP" id="MF_00182">
    <property type="entry name" value="Formyl_trans"/>
    <property type="match status" value="1"/>
</dbReference>
<dbReference type="InterPro" id="IPR005794">
    <property type="entry name" value="Fmt"/>
</dbReference>
<dbReference type="InterPro" id="IPR005793">
    <property type="entry name" value="Formyl_trans_C"/>
</dbReference>
<dbReference type="InterPro" id="IPR002376">
    <property type="entry name" value="Formyl_transf_N"/>
</dbReference>
<dbReference type="InterPro" id="IPR036477">
    <property type="entry name" value="Formyl_transf_N_sf"/>
</dbReference>
<dbReference type="InterPro" id="IPR011034">
    <property type="entry name" value="Formyl_transferase-like_C_sf"/>
</dbReference>
<dbReference type="InterPro" id="IPR044135">
    <property type="entry name" value="Met-tRNA-FMT_C"/>
</dbReference>
<dbReference type="InterPro" id="IPR041711">
    <property type="entry name" value="Met-tRNA-FMT_N"/>
</dbReference>
<dbReference type="NCBIfam" id="TIGR00460">
    <property type="entry name" value="fmt"/>
    <property type="match status" value="1"/>
</dbReference>
<dbReference type="PANTHER" id="PTHR11138">
    <property type="entry name" value="METHIONYL-TRNA FORMYLTRANSFERASE"/>
    <property type="match status" value="1"/>
</dbReference>
<dbReference type="PANTHER" id="PTHR11138:SF5">
    <property type="entry name" value="METHIONYL-TRNA FORMYLTRANSFERASE, MITOCHONDRIAL"/>
    <property type="match status" value="1"/>
</dbReference>
<dbReference type="Pfam" id="PF02911">
    <property type="entry name" value="Formyl_trans_C"/>
    <property type="match status" value="1"/>
</dbReference>
<dbReference type="Pfam" id="PF00551">
    <property type="entry name" value="Formyl_trans_N"/>
    <property type="match status" value="1"/>
</dbReference>
<dbReference type="SUPFAM" id="SSF50486">
    <property type="entry name" value="FMT C-terminal domain-like"/>
    <property type="match status" value="1"/>
</dbReference>
<dbReference type="SUPFAM" id="SSF53328">
    <property type="entry name" value="Formyltransferase"/>
    <property type="match status" value="1"/>
</dbReference>
<sequence>MRLVFAGTPEPALPSLQRLIASPRHEVVAVLTRPDAAAGRRGRPTPSPVARLALDHDIPVLRPPKPNSEEFVAELRELAPDCCAVVAYGALLSERLLAVPPHGWINLHFSLLPAWRGAAPVQAAIAAGDAVTGATTFLIEPALDSGPVYGVVTETIRANDTAGELLTRLAESGAHLLESTLDGIADGRLQAVPQPADGVTVAPKITVDEARVRWDLPAHVVDRRIRAVTPNPGAWTVIGDARVKLGPVAPESAEPLAPGAIRVLKNAVHVGTATEPVRLGTVQPPGKKPMNAADWARGARLDASVSAQ</sequence>
<reference key="1">
    <citation type="submission" date="2006-12" db="EMBL/GenBank/DDBJ databases">
        <title>Complete sequence of chromosome of Mycobacterium sp. KMS.</title>
        <authorList>
            <consortium name="US DOE Joint Genome Institute"/>
            <person name="Copeland A."/>
            <person name="Lucas S."/>
            <person name="Lapidus A."/>
            <person name="Barry K."/>
            <person name="Detter J.C."/>
            <person name="Glavina del Rio T."/>
            <person name="Hammon N."/>
            <person name="Israni S."/>
            <person name="Dalin E."/>
            <person name="Tice H."/>
            <person name="Pitluck S."/>
            <person name="Kiss H."/>
            <person name="Brettin T."/>
            <person name="Bruce D."/>
            <person name="Han C."/>
            <person name="Tapia R."/>
            <person name="Gilna P."/>
            <person name="Schmutz J."/>
            <person name="Larimer F."/>
            <person name="Land M."/>
            <person name="Hauser L."/>
            <person name="Kyrpides N."/>
            <person name="Mikhailova N."/>
            <person name="Miller C.D."/>
            <person name="Richardson P."/>
        </authorList>
    </citation>
    <scope>NUCLEOTIDE SEQUENCE [LARGE SCALE GENOMIC DNA]</scope>
    <source>
        <strain>KMS</strain>
    </source>
</reference>
<protein>
    <recommendedName>
        <fullName evidence="1">Methionyl-tRNA formyltransferase</fullName>
        <ecNumber evidence="1">2.1.2.9</ecNumber>
    </recommendedName>
</protein>
<feature type="chain" id="PRO_1000020103" description="Methionyl-tRNA formyltransferase">
    <location>
        <begin position="1"/>
        <end position="308"/>
    </location>
</feature>
<feature type="binding site" evidence="1">
    <location>
        <begin position="110"/>
        <end position="113"/>
    </location>
    <ligand>
        <name>(6S)-5,6,7,8-tetrahydrofolate</name>
        <dbReference type="ChEBI" id="CHEBI:57453"/>
    </ligand>
</feature>